<dbReference type="EC" id="6.1.1.17" evidence="1"/>
<dbReference type="EMBL" id="CP000481">
    <property type="protein sequence ID" value="ABK52487.1"/>
    <property type="molecule type" value="Genomic_DNA"/>
</dbReference>
<dbReference type="RefSeq" id="WP_011719550.1">
    <property type="nucleotide sequence ID" value="NC_008578.1"/>
</dbReference>
<dbReference type="SMR" id="A0LSS7"/>
<dbReference type="FunCoup" id="A0LSS7">
    <property type="interactions" value="367"/>
</dbReference>
<dbReference type="STRING" id="351607.Acel_0714"/>
<dbReference type="KEGG" id="ace:Acel_0714"/>
<dbReference type="eggNOG" id="COG0008">
    <property type="taxonomic scope" value="Bacteria"/>
</dbReference>
<dbReference type="HOGENOM" id="CLU_015768_6_1_11"/>
<dbReference type="InParanoid" id="A0LSS7"/>
<dbReference type="OrthoDB" id="9807503at2"/>
<dbReference type="Proteomes" id="UP000008221">
    <property type="component" value="Chromosome"/>
</dbReference>
<dbReference type="GO" id="GO:0005829">
    <property type="term" value="C:cytosol"/>
    <property type="evidence" value="ECO:0007669"/>
    <property type="project" value="TreeGrafter"/>
</dbReference>
<dbReference type="GO" id="GO:0005524">
    <property type="term" value="F:ATP binding"/>
    <property type="evidence" value="ECO:0007669"/>
    <property type="project" value="UniProtKB-UniRule"/>
</dbReference>
<dbReference type="GO" id="GO:0004818">
    <property type="term" value="F:glutamate-tRNA ligase activity"/>
    <property type="evidence" value="ECO:0007669"/>
    <property type="project" value="UniProtKB-UniRule"/>
</dbReference>
<dbReference type="GO" id="GO:0000049">
    <property type="term" value="F:tRNA binding"/>
    <property type="evidence" value="ECO:0007669"/>
    <property type="project" value="InterPro"/>
</dbReference>
<dbReference type="GO" id="GO:0008270">
    <property type="term" value="F:zinc ion binding"/>
    <property type="evidence" value="ECO:0007669"/>
    <property type="project" value="InterPro"/>
</dbReference>
<dbReference type="GO" id="GO:0006424">
    <property type="term" value="P:glutamyl-tRNA aminoacylation"/>
    <property type="evidence" value="ECO:0007669"/>
    <property type="project" value="UniProtKB-UniRule"/>
</dbReference>
<dbReference type="CDD" id="cd00808">
    <property type="entry name" value="GluRS_core"/>
    <property type="match status" value="1"/>
</dbReference>
<dbReference type="FunFam" id="3.40.50.620:FF:000045">
    <property type="entry name" value="Glutamate--tRNA ligase, mitochondrial"/>
    <property type="match status" value="1"/>
</dbReference>
<dbReference type="Gene3D" id="1.10.10.350">
    <property type="match status" value="1"/>
</dbReference>
<dbReference type="Gene3D" id="1.10.8.70">
    <property type="entry name" value="Glutamate-tRNA synthetase, class I, anticodon-binding domain 1"/>
    <property type="match status" value="1"/>
</dbReference>
<dbReference type="Gene3D" id="3.40.50.620">
    <property type="entry name" value="HUPs"/>
    <property type="match status" value="1"/>
</dbReference>
<dbReference type="HAMAP" id="MF_00022">
    <property type="entry name" value="Glu_tRNA_synth_type1"/>
    <property type="match status" value="1"/>
</dbReference>
<dbReference type="InterPro" id="IPR045462">
    <property type="entry name" value="aa-tRNA-synth_I_cd-bd"/>
</dbReference>
<dbReference type="InterPro" id="IPR020751">
    <property type="entry name" value="aa-tRNA-synth_I_codon-bd_sub2"/>
</dbReference>
<dbReference type="InterPro" id="IPR001412">
    <property type="entry name" value="aa-tRNA-synth_I_CS"/>
</dbReference>
<dbReference type="InterPro" id="IPR008925">
    <property type="entry name" value="aa_tRNA-synth_I_cd-bd_sf"/>
</dbReference>
<dbReference type="InterPro" id="IPR004527">
    <property type="entry name" value="Glu-tRNA-ligase_bac/mito"/>
</dbReference>
<dbReference type="InterPro" id="IPR020752">
    <property type="entry name" value="Glu-tRNA-synth_I_codon-bd_sub1"/>
</dbReference>
<dbReference type="InterPro" id="IPR000924">
    <property type="entry name" value="Glu/Gln-tRNA-synth"/>
</dbReference>
<dbReference type="InterPro" id="IPR020058">
    <property type="entry name" value="Glu/Gln-tRNA-synth_Ib_cat-dom"/>
</dbReference>
<dbReference type="InterPro" id="IPR049940">
    <property type="entry name" value="GluQ/Sye"/>
</dbReference>
<dbReference type="InterPro" id="IPR033910">
    <property type="entry name" value="GluRS_core"/>
</dbReference>
<dbReference type="InterPro" id="IPR014729">
    <property type="entry name" value="Rossmann-like_a/b/a_fold"/>
</dbReference>
<dbReference type="NCBIfam" id="TIGR00464">
    <property type="entry name" value="gltX_bact"/>
    <property type="match status" value="1"/>
</dbReference>
<dbReference type="PANTHER" id="PTHR43311">
    <property type="entry name" value="GLUTAMATE--TRNA LIGASE"/>
    <property type="match status" value="1"/>
</dbReference>
<dbReference type="PANTHER" id="PTHR43311:SF2">
    <property type="entry name" value="GLUTAMATE--TRNA LIGASE, MITOCHONDRIAL-RELATED"/>
    <property type="match status" value="1"/>
</dbReference>
<dbReference type="Pfam" id="PF19269">
    <property type="entry name" value="Anticodon_2"/>
    <property type="match status" value="1"/>
</dbReference>
<dbReference type="Pfam" id="PF00749">
    <property type="entry name" value="tRNA-synt_1c"/>
    <property type="match status" value="1"/>
</dbReference>
<dbReference type="PRINTS" id="PR00987">
    <property type="entry name" value="TRNASYNTHGLU"/>
</dbReference>
<dbReference type="SUPFAM" id="SSF48163">
    <property type="entry name" value="An anticodon-binding domain of class I aminoacyl-tRNA synthetases"/>
    <property type="match status" value="1"/>
</dbReference>
<dbReference type="SUPFAM" id="SSF52374">
    <property type="entry name" value="Nucleotidylyl transferase"/>
    <property type="match status" value="1"/>
</dbReference>
<dbReference type="PROSITE" id="PS00178">
    <property type="entry name" value="AA_TRNA_LIGASE_I"/>
    <property type="match status" value="1"/>
</dbReference>
<reference key="1">
    <citation type="journal article" date="2009" name="Genome Res.">
        <title>Complete genome of the cellulolytic thermophile Acidothermus cellulolyticus 11B provides insights into its ecophysiological and evolutionary adaptations.</title>
        <authorList>
            <person name="Barabote R.D."/>
            <person name="Xie G."/>
            <person name="Leu D.H."/>
            <person name="Normand P."/>
            <person name="Necsulea A."/>
            <person name="Daubin V."/>
            <person name="Medigue C."/>
            <person name="Adney W.S."/>
            <person name="Xu X.C."/>
            <person name="Lapidus A."/>
            <person name="Parales R.E."/>
            <person name="Detter C."/>
            <person name="Pujic P."/>
            <person name="Bruce D."/>
            <person name="Lavire C."/>
            <person name="Challacombe J.F."/>
            <person name="Brettin T.S."/>
            <person name="Berry A.M."/>
        </authorList>
    </citation>
    <scope>NUCLEOTIDE SEQUENCE [LARGE SCALE GENOMIC DNA]</scope>
    <source>
        <strain>ATCC 43068 / DSM 8971 / 11B</strain>
    </source>
</reference>
<accession>A0LSS7</accession>
<name>SYE_ACIC1</name>
<sequence>MTVRVRVAPSPTGDPHVGTAYMSLFNLAFARRHGGAFVLRIEDTDRSRYVADSEQQIFDSLRWLGLDWDEGPDKGGPYGPYRQSERLDTYRPYVDQLLASGHAYYCWCSPERLAAMREEQQRRRQPPGYDRLCYGKTREERARLGGFSERPVVRMLIPDDVPLTFPDLIRGQVSAPRPDDQVILKADGFPTYHFAVVVDDHLMAITHVVRGEEWISSTPKHLLLYDWLGWPRPQFAHMPLLRNPDKSKISKRKNPAARLLWFKEQGYLPEALRNFLALMGYSMPDGREVFSFDEMVAEFDWSRVNPVGPVFDVTKLDWLNGHYIRSLPVDDLAERLIPYLQEARLIGTPVTPREDALLRAAAPLVQERIAHLTEAAELLAFLLRPEEEFGIEPDAAQRVLGRDAAASLRAAIDALEPLADWTASAIHAALQAALVDGLGLKPRHAFTPVRVAITGRTVSPPLFESMELLGRDRSLARLRRAAAIADAGGADSAGVGPGSAVRTD</sequence>
<feature type="chain" id="PRO_1000057189" description="Glutamate--tRNA ligase">
    <location>
        <begin position="1"/>
        <end position="504"/>
    </location>
</feature>
<feature type="short sequence motif" description="'HIGH' region" evidence="1">
    <location>
        <begin position="9"/>
        <end position="19"/>
    </location>
</feature>
<feature type="short sequence motif" description="'KMSKS' region" evidence="1">
    <location>
        <begin position="248"/>
        <end position="252"/>
    </location>
</feature>
<feature type="binding site" evidence="1">
    <location>
        <position position="251"/>
    </location>
    <ligand>
        <name>ATP</name>
        <dbReference type="ChEBI" id="CHEBI:30616"/>
    </ligand>
</feature>
<proteinExistence type="inferred from homology"/>
<evidence type="ECO:0000255" key="1">
    <source>
        <dbReference type="HAMAP-Rule" id="MF_00022"/>
    </source>
</evidence>
<keyword id="KW-0030">Aminoacyl-tRNA synthetase</keyword>
<keyword id="KW-0067">ATP-binding</keyword>
<keyword id="KW-0963">Cytoplasm</keyword>
<keyword id="KW-0436">Ligase</keyword>
<keyword id="KW-0547">Nucleotide-binding</keyword>
<keyword id="KW-0648">Protein biosynthesis</keyword>
<keyword id="KW-1185">Reference proteome</keyword>
<comment type="function">
    <text evidence="1">Catalyzes the attachment of glutamate to tRNA(Glu) in a two-step reaction: glutamate is first activated by ATP to form Glu-AMP and then transferred to the acceptor end of tRNA(Glu).</text>
</comment>
<comment type="catalytic activity">
    <reaction evidence="1">
        <text>tRNA(Glu) + L-glutamate + ATP = L-glutamyl-tRNA(Glu) + AMP + diphosphate</text>
        <dbReference type="Rhea" id="RHEA:23540"/>
        <dbReference type="Rhea" id="RHEA-COMP:9663"/>
        <dbReference type="Rhea" id="RHEA-COMP:9680"/>
        <dbReference type="ChEBI" id="CHEBI:29985"/>
        <dbReference type="ChEBI" id="CHEBI:30616"/>
        <dbReference type="ChEBI" id="CHEBI:33019"/>
        <dbReference type="ChEBI" id="CHEBI:78442"/>
        <dbReference type="ChEBI" id="CHEBI:78520"/>
        <dbReference type="ChEBI" id="CHEBI:456215"/>
        <dbReference type="EC" id="6.1.1.17"/>
    </reaction>
</comment>
<comment type="subunit">
    <text evidence="1">Monomer.</text>
</comment>
<comment type="subcellular location">
    <subcellularLocation>
        <location evidence="1">Cytoplasm</location>
    </subcellularLocation>
</comment>
<comment type="similarity">
    <text evidence="1">Belongs to the class-I aminoacyl-tRNA synthetase family. Glutamate--tRNA ligase type 1 subfamily.</text>
</comment>
<protein>
    <recommendedName>
        <fullName evidence="1">Glutamate--tRNA ligase</fullName>
        <ecNumber evidence="1">6.1.1.17</ecNumber>
    </recommendedName>
    <alternativeName>
        <fullName evidence="1">Glutamyl-tRNA synthetase</fullName>
        <shortName evidence="1">GluRS</shortName>
    </alternativeName>
</protein>
<gene>
    <name evidence="1" type="primary">gltX</name>
    <name type="ordered locus">Acel_0714</name>
</gene>
<organism>
    <name type="scientific">Acidothermus cellulolyticus (strain ATCC 43068 / DSM 8971 / 11B)</name>
    <dbReference type="NCBI Taxonomy" id="351607"/>
    <lineage>
        <taxon>Bacteria</taxon>
        <taxon>Bacillati</taxon>
        <taxon>Actinomycetota</taxon>
        <taxon>Actinomycetes</taxon>
        <taxon>Acidothermales</taxon>
        <taxon>Acidothermaceae</taxon>
        <taxon>Acidothermus</taxon>
    </lineage>
</organism>